<dbReference type="EMBL" id="AE014299">
    <property type="protein sequence ID" value="AAN54537.1"/>
    <property type="molecule type" value="Genomic_DNA"/>
</dbReference>
<dbReference type="RefSeq" id="NP_717092.1">
    <property type="nucleotide sequence ID" value="NC_004347.2"/>
</dbReference>
<dbReference type="RefSeq" id="WP_011071664.1">
    <property type="nucleotide sequence ID" value="NC_004347.2"/>
</dbReference>
<dbReference type="SMR" id="Q8EGW5"/>
<dbReference type="STRING" id="211586.SO_1476"/>
<dbReference type="PaxDb" id="211586-SO_1476"/>
<dbReference type="KEGG" id="son:SO_1476"/>
<dbReference type="PATRIC" id="fig|211586.12.peg.1421"/>
<dbReference type="eggNOG" id="COG2913">
    <property type="taxonomic scope" value="Bacteria"/>
</dbReference>
<dbReference type="HOGENOM" id="CLU_083835_2_2_6"/>
<dbReference type="OrthoDB" id="9808250at2"/>
<dbReference type="PhylomeDB" id="Q8EGW5"/>
<dbReference type="BioCyc" id="SONE211586:G1GMP-1366-MONOMER"/>
<dbReference type="Proteomes" id="UP000008186">
    <property type="component" value="Chromosome"/>
</dbReference>
<dbReference type="GO" id="GO:1990063">
    <property type="term" value="C:Bam protein complex"/>
    <property type="evidence" value="ECO:0000318"/>
    <property type="project" value="GO_Central"/>
</dbReference>
<dbReference type="GO" id="GO:0030674">
    <property type="term" value="F:protein-macromolecule adaptor activity"/>
    <property type="evidence" value="ECO:0000318"/>
    <property type="project" value="GO_Central"/>
</dbReference>
<dbReference type="GO" id="GO:0043165">
    <property type="term" value="P:Gram-negative-bacterium-type cell outer membrane assembly"/>
    <property type="evidence" value="ECO:0000318"/>
    <property type="project" value="GO_Central"/>
</dbReference>
<dbReference type="GO" id="GO:0051205">
    <property type="term" value="P:protein insertion into membrane"/>
    <property type="evidence" value="ECO:0000318"/>
    <property type="project" value="GO_Central"/>
</dbReference>
<dbReference type="Gene3D" id="3.30.1450.10">
    <property type="match status" value="1"/>
</dbReference>
<dbReference type="HAMAP" id="MF_00925">
    <property type="entry name" value="OM_assembly_BamE"/>
    <property type="match status" value="1"/>
</dbReference>
<dbReference type="InterPro" id="IPR026592">
    <property type="entry name" value="BamE"/>
</dbReference>
<dbReference type="InterPro" id="IPR037873">
    <property type="entry name" value="BamE-like"/>
</dbReference>
<dbReference type="InterPro" id="IPR007450">
    <property type="entry name" value="BamE_dom"/>
</dbReference>
<dbReference type="PANTHER" id="PTHR37482">
    <property type="entry name" value="OUTER MEMBRANE PROTEIN ASSEMBLY FACTOR BAME"/>
    <property type="match status" value="1"/>
</dbReference>
<dbReference type="PANTHER" id="PTHR37482:SF1">
    <property type="entry name" value="OUTER MEMBRANE PROTEIN ASSEMBLY FACTOR BAME"/>
    <property type="match status" value="1"/>
</dbReference>
<dbReference type="Pfam" id="PF04355">
    <property type="entry name" value="BamE"/>
    <property type="match status" value="1"/>
</dbReference>
<dbReference type="PROSITE" id="PS51257">
    <property type="entry name" value="PROKAR_LIPOPROTEIN"/>
    <property type="match status" value="1"/>
</dbReference>
<feature type="signal peptide" evidence="1">
    <location>
        <begin position="1"/>
        <end position="22"/>
    </location>
</feature>
<feature type="chain" id="PRO_0000417869" description="Outer membrane protein assembly factor BamE">
    <location>
        <begin position="23"/>
        <end position="163"/>
    </location>
</feature>
<feature type="region of interest" description="Disordered" evidence="2">
    <location>
        <begin position="122"/>
        <end position="163"/>
    </location>
</feature>
<feature type="compositionally biased region" description="Basic and acidic residues" evidence="2">
    <location>
        <begin position="142"/>
        <end position="153"/>
    </location>
</feature>
<feature type="lipid moiety-binding region" description="N-palmitoyl cysteine" evidence="1">
    <location>
        <position position="23"/>
    </location>
</feature>
<feature type="lipid moiety-binding region" description="S-diacylglycerol cysteine" evidence="1">
    <location>
        <position position="23"/>
    </location>
</feature>
<sequence>MINKKQSLTLLSAIALSVSLSACSVFDWLIYKPDIPQGNYMEPQQVEKLRIDMTKEQAEYILGRPVLRDSFADDTWYYVYHYKSGRDASITHKELILHFTGNKLSLVKGDYELSPEFNTPLEQSKLPMVNTTESAPQVPAQRPDEKPLVKENQTEAQVQKPIK</sequence>
<organism>
    <name type="scientific">Shewanella oneidensis (strain ATCC 700550 / JCM 31522 / CIP 106686 / LMG 19005 / NCIMB 14063 / MR-1)</name>
    <dbReference type="NCBI Taxonomy" id="211586"/>
    <lineage>
        <taxon>Bacteria</taxon>
        <taxon>Pseudomonadati</taxon>
        <taxon>Pseudomonadota</taxon>
        <taxon>Gammaproteobacteria</taxon>
        <taxon>Alteromonadales</taxon>
        <taxon>Shewanellaceae</taxon>
        <taxon>Shewanella</taxon>
    </lineage>
</organism>
<keyword id="KW-0998">Cell outer membrane</keyword>
<keyword id="KW-0449">Lipoprotein</keyword>
<keyword id="KW-0472">Membrane</keyword>
<keyword id="KW-0564">Palmitate</keyword>
<keyword id="KW-1185">Reference proteome</keyword>
<keyword id="KW-0732">Signal</keyword>
<protein>
    <recommendedName>
        <fullName evidence="1">Outer membrane protein assembly factor BamE</fullName>
    </recommendedName>
</protein>
<reference key="1">
    <citation type="journal article" date="2002" name="Nat. Biotechnol.">
        <title>Genome sequence of the dissimilatory metal ion-reducing bacterium Shewanella oneidensis.</title>
        <authorList>
            <person name="Heidelberg J.F."/>
            <person name="Paulsen I.T."/>
            <person name="Nelson K.E."/>
            <person name="Gaidos E.J."/>
            <person name="Nelson W.C."/>
            <person name="Read T.D."/>
            <person name="Eisen J.A."/>
            <person name="Seshadri R."/>
            <person name="Ward N.L."/>
            <person name="Methe B.A."/>
            <person name="Clayton R.A."/>
            <person name="Meyer T."/>
            <person name="Tsapin A."/>
            <person name="Scott J."/>
            <person name="Beanan M.J."/>
            <person name="Brinkac L.M."/>
            <person name="Daugherty S.C."/>
            <person name="DeBoy R.T."/>
            <person name="Dodson R.J."/>
            <person name="Durkin A.S."/>
            <person name="Haft D.H."/>
            <person name="Kolonay J.F."/>
            <person name="Madupu R."/>
            <person name="Peterson J.D."/>
            <person name="Umayam L.A."/>
            <person name="White O."/>
            <person name="Wolf A.M."/>
            <person name="Vamathevan J.J."/>
            <person name="Weidman J.F."/>
            <person name="Impraim M."/>
            <person name="Lee K."/>
            <person name="Berry K.J."/>
            <person name="Lee C."/>
            <person name="Mueller J."/>
            <person name="Khouri H.M."/>
            <person name="Gill J."/>
            <person name="Utterback T.R."/>
            <person name="McDonald L.A."/>
            <person name="Feldblyum T.V."/>
            <person name="Smith H.O."/>
            <person name="Venter J.C."/>
            <person name="Nealson K.H."/>
            <person name="Fraser C.M."/>
        </authorList>
    </citation>
    <scope>NUCLEOTIDE SEQUENCE [LARGE SCALE GENOMIC DNA]</scope>
    <source>
        <strain>ATCC 700550 / JCM 31522 / CIP 106686 / LMG 19005 / NCIMB 14063 / MR-1</strain>
    </source>
</reference>
<accession>Q8EGW5</accession>
<gene>
    <name evidence="1" type="primary">bamE</name>
    <name type="synonym">smpA</name>
    <name type="ordered locus">SO_1476</name>
</gene>
<comment type="function">
    <text evidence="1">Part of the outer membrane protein assembly complex, which is involved in assembly and insertion of beta-barrel proteins into the outer membrane.</text>
</comment>
<comment type="subunit">
    <text evidence="1">Part of the Bam complex.</text>
</comment>
<comment type="subcellular location">
    <subcellularLocation>
        <location evidence="1">Cell outer membrane</location>
        <topology evidence="1">Lipid-anchor</topology>
    </subcellularLocation>
</comment>
<comment type="similarity">
    <text evidence="1">Belongs to the BamE family.</text>
</comment>
<evidence type="ECO:0000255" key="1">
    <source>
        <dbReference type="HAMAP-Rule" id="MF_00925"/>
    </source>
</evidence>
<evidence type="ECO:0000256" key="2">
    <source>
        <dbReference type="SAM" id="MobiDB-lite"/>
    </source>
</evidence>
<name>BAME_SHEON</name>
<proteinExistence type="inferred from homology"/>